<keyword id="KW-0342">GTP-binding</keyword>
<keyword id="KW-0378">Hydrolase</keyword>
<keyword id="KW-0479">Metal-binding</keyword>
<keyword id="KW-0547">Nucleotide-binding</keyword>
<keyword id="KW-0686">Riboflavin biosynthesis</keyword>
<keyword id="KW-0862">Zinc</keyword>
<reference key="1">
    <citation type="submission" date="2002-12" db="EMBL/GenBank/DDBJ databases">
        <title>Complete genome sequence of Vibrio vulnificus CMCP6.</title>
        <authorList>
            <person name="Rhee J.H."/>
            <person name="Kim S.Y."/>
            <person name="Chung S.S."/>
            <person name="Kim J.J."/>
            <person name="Moon Y.H."/>
            <person name="Jeong H."/>
            <person name="Choy H.E."/>
        </authorList>
    </citation>
    <scope>NUCLEOTIDE SEQUENCE [LARGE SCALE GENOMIC DNA]</scope>
    <source>
        <strain>CMCP6</strain>
    </source>
</reference>
<organism>
    <name type="scientific">Vibrio vulnificus (strain CMCP6)</name>
    <dbReference type="NCBI Taxonomy" id="216895"/>
    <lineage>
        <taxon>Bacteria</taxon>
        <taxon>Pseudomonadati</taxon>
        <taxon>Pseudomonadota</taxon>
        <taxon>Gammaproteobacteria</taxon>
        <taxon>Vibrionales</taxon>
        <taxon>Vibrionaceae</taxon>
        <taxon>Vibrio</taxon>
    </lineage>
</organism>
<feature type="chain" id="PRO_0000151780" description="GTP cyclohydrolase-2">
    <location>
        <begin position="1"/>
        <end position="198"/>
    </location>
</feature>
<feature type="active site" description="Proton acceptor" evidence="1">
    <location>
        <position position="128"/>
    </location>
</feature>
<feature type="active site" description="Nucleophile" evidence="1">
    <location>
        <position position="130"/>
    </location>
</feature>
<feature type="binding site" evidence="1">
    <location>
        <begin position="52"/>
        <end position="56"/>
    </location>
    <ligand>
        <name>GTP</name>
        <dbReference type="ChEBI" id="CHEBI:37565"/>
    </ligand>
</feature>
<feature type="binding site" evidence="1">
    <location>
        <position position="57"/>
    </location>
    <ligand>
        <name>Zn(2+)</name>
        <dbReference type="ChEBI" id="CHEBI:29105"/>
        <note>catalytic</note>
    </ligand>
</feature>
<feature type="binding site" evidence="1">
    <location>
        <position position="68"/>
    </location>
    <ligand>
        <name>Zn(2+)</name>
        <dbReference type="ChEBI" id="CHEBI:29105"/>
        <note>catalytic</note>
    </ligand>
</feature>
<feature type="binding site" evidence="1">
    <location>
        <position position="70"/>
    </location>
    <ligand>
        <name>Zn(2+)</name>
        <dbReference type="ChEBI" id="CHEBI:29105"/>
        <note>catalytic</note>
    </ligand>
</feature>
<feature type="binding site" evidence="1">
    <location>
        <position position="73"/>
    </location>
    <ligand>
        <name>GTP</name>
        <dbReference type="ChEBI" id="CHEBI:37565"/>
    </ligand>
</feature>
<feature type="binding site" evidence="1">
    <location>
        <begin position="94"/>
        <end position="96"/>
    </location>
    <ligand>
        <name>GTP</name>
        <dbReference type="ChEBI" id="CHEBI:37565"/>
    </ligand>
</feature>
<feature type="binding site" evidence="1">
    <location>
        <position position="116"/>
    </location>
    <ligand>
        <name>GTP</name>
        <dbReference type="ChEBI" id="CHEBI:37565"/>
    </ligand>
</feature>
<feature type="binding site" evidence="1">
    <location>
        <position position="151"/>
    </location>
    <ligand>
        <name>GTP</name>
        <dbReference type="ChEBI" id="CHEBI:37565"/>
    </ligand>
</feature>
<feature type="binding site" evidence="1">
    <location>
        <position position="156"/>
    </location>
    <ligand>
        <name>GTP</name>
        <dbReference type="ChEBI" id="CHEBI:37565"/>
    </ligand>
</feature>
<evidence type="ECO:0000255" key="1">
    <source>
        <dbReference type="HAMAP-Rule" id="MF_00179"/>
    </source>
</evidence>
<proteinExistence type="inferred from homology"/>
<accession>Q8DAG7</accession>
<gene>
    <name evidence="1" type="primary">ribA</name>
    <name type="ordered locus">VV1_2234</name>
</gene>
<comment type="function">
    <text evidence="1">Catalyzes the conversion of GTP to 2,5-diamino-6-ribosylamino-4(3H)-pyrimidinone 5'-phosphate (DARP), formate and pyrophosphate.</text>
</comment>
<comment type="catalytic activity">
    <reaction evidence="1">
        <text>GTP + 4 H2O = 2,5-diamino-6-hydroxy-4-(5-phosphoribosylamino)-pyrimidine + formate + 2 phosphate + 3 H(+)</text>
        <dbReference type="Rhea" id="RHEA:23704"/>
        <dbReference type="ChEBI" id="CHEBI:15377"/>
        <dbReference type="ChEBI" id="CHEBI:15378"/>
        <dbReference type="ChEBI" id="CHEBI:15740"/>
        <dbReference type="ChEBI" id="CHEBI:37565"/>
        <dbReference type="ChEBI" id="CHEBI:43474"/>
        <dbReference type="ChEBI" id="CHEBI:58614"/>
        <dbReference type="EC" id="3.5.4.25"/>
    </reaction>
</comment>
<comment type="cofactor">
    <cofactor evidence="1">
        <name>Zn(2+)</name>
        <dbReference type="ChEBI" id="CHEBI:29105"/>
    </cofactor>
    <text evidence="1">Binds 1 zinc ion per subunit.</text>
</comment>
<comment type="pathway">
    <text evidence="1">Cofactor biosynthesis; riboflavin biosynthesis; 5-amino-6-(D-ribitylamino)uracil from GTP: step 1/4.</text>
</comment>
<comment type="similarity">
    <text evidence="1">Belongs to the GTP cyclohydrolase II family.</text>
</comment>
<protein>
    <recommendedName>
        <fullName evidence="1">GTP cyclohydrolase-2</fullName>
        <ecNumber evidence="1">3.5.4.25</ecNumber>
    </recommendedName>
    <alternativeName>
        <fullName evidence="1">GTP cyclohydrolase II</fullName>
    </alternativeName>
</protein>
<dbReference type="EC" id="3.5.4.25" evidence="1"/>
<dbReference type="EMBL" id="AE016795">
    <property type="protein sequence ID" value="AAO10614.1"/>
    <property type="molecule type" value="Genomic_DNA"/>
</dbReference>
<dbReference type="SMR" id="Q8DAG7"/>
<dbReference type="KEGG" id="vvu:VV1_2234"/>
<dbReference type="HOGENOM" id="CLU_020273_2_1_6"/>
<dbReference type="UniPathway" id="UPA00275">
    <property type="reaction ID" value="UER00400"/>
</dbReference>
<dbReference type="Proteomes" id="UP000002275">
    <property type="component" value="Chromosome 1"/>
</dbReference>
<dbReference type="GO" id="GO:0005829">
    <property type="term" value="C:cytosol"/>
    <property type="evidence" value="ECO:0007669"/>
    <property type="project" value="TreeGrafter"/>
</dbReference>
<dbReference type="GO" id="GO:0005525">
    <property type="term" value="F:GTP binding"/>
    <property type="evidence" value="ECO:0007669"/>
    <property type="project" value="UniProtKB-KW"/>
</dbReference>
<dbReference type="GO" id="GO:0003935">
    <property type="term" value="F:GTP cyclohydrolase II activity"/>
    <property type="evidence" value="ECO:0007669"/>
    <property type="project" value="UniProtKB-UniRule"/>
</dbReference>
<dbReference type="GO" id="GO:0008270">
    <property type="term" value="F:zinc ion binding"/>
    <property type="evidence" value="ECO:0007669"/>
    <property type="project" value="UniProtKB-UniRule"/>
</dbReference>
<dbReference type="GO" id="GO:0009231">
    <property type="term" value="P:riboflavin biosynthetic process"/>
    <property type="evidence" value="ECO:0007669"/>
    <property type="project" value="UniProtKB-UniRule"/>
</dbReference>
<dbReference type="CDD" id="cd00641">
    <property type="entry name" value="GTP_cyclohydro2"/>
    <property type="match status" value="1"/>
</dbReference>
<dbReference type="FunFam" id="3.40.50.10990:FF:000001">
    <property type="entry name" value="Riboflavin biosynthesis protein RibBA"/>
    <property type="match status" value="1"/>
</dbReference>
<dbReference type="Gene3D" id="3.40.50.10990">
    <property type="entry name" value="GTP cyclohydrolase II"/>
    <property type="match status" value="1"/>
</dbReference>
<dbReference type="HAMAP" id="MF_00179">
    <property type="entry name" value="RibA"/>
    <property type="match status" value="1"/>
</dbReference>
<dbReference type="InterPro" id="IPR032677">
    <property type="entry name" value="GTP_cyclohydro_II"/>
</dbReference>
<dbReference type="InterPro" id="IPR000926">
    <property type="entry name" value="RibA"/>
</dbReference>
<dbReference type="InterPro" id="IPR036144">
    <property type="entry name" value="RibA-like_sf"/>
</dbReference>
<dbReference type="NCBIfam" id="NF001591">
    <property type="entry name" value="PRK00393.1"/>
    <property type="match status" value="1"/>
</dbReference>
<dbReference type="NCBIfam" id="TIGR00505">
    <property type="entry name" value="ribA"/>
    <property type="match status" value="1"/>
</dbReference>
<dbReference type="PANTHER" id="PTHR21327:SF18">
    <property type="entry name" value="3,4-DIHYDROXY-2-BUTANONE 4-PHOSPHATE SYNTHASE"/>
    <property type="match status" value="1"/>
</dbReference>
<dbReference type="PANTHER" id="PTHR21327">
    <property type="entry name" value="GTP CYCLOHYDROLASE II-RELATED"/>
    <property type="match status" value="1"/>
</dbReference>
<dbReference type="Pfam" id="PF00925">
    <property type="entry name" value="GTP_cyclohydro2"/>
    <property type="match status" value="1"/>
</dbReference>
<dbReference type="SUPFAM" id="SSF142695">
    <property type="entry name" value="RibA-like"/>
    <property type="match status" value="1"/>
</dbReference>
<name>RIBA_VIBVU</name>
<sequence length="198" mass="22249">MAEVRARVDFKVGAKSNIDAEILSFRGLKTDKEHVAVIFKSADVTQEVPLVRMHSECLTGDVFHSSRCDCGEQLEETINRMGESGGIILYLRQEGRGIGLYNKIDAYRLQSEGMNTYEANNHLGFDDDLRDFTEAAQMLEALGIKQIRLVTNNPKKIRELSEYGIEIVEVVNTSAHIKEGNESYLKAKVSHGKHHLKV</sequence>